<protein>
    <recommendedName>
        <fullName evidence="1">Phosphoribosylformylglycinamidine synthase subunit PurQ</fullName>
        <shortName evidence="1">FGAM synthase</shortName>
        <ecNumber evidence="1">6.3.5.3</ecNumber>
    </recommendedName>
    <alternativeName>
        <fullName evidence="1">Formylglycinamide ribonucleotide amidotransferase subunit I</fullName>
        <shortName evidence="1">FGAR amidotransferase I</shortName>
        <shortName evidence="1">FGAR-AT I</shortName>
    </alternativeName>
    <alternativeName>
        <fullName evidence="1">Glutaminase PurQ</fullName>
        <ecNumber evidence="1">3.5.1.2</ecNumber>
    </alternativeName>
    <alternativeName>
        <fullName evidence="1">Phosphoribosylformylglycinamidine synthase subunit I</fullName>
    </alternativeName>
</protein>
<proteinExistence type="inferred from homology"/>
<dbReference type="EC" id="6.3.5.3" evidence="1"/>
<dbReference type="EC" id="3.5.1.2" evidence="1"/>
<dbReference type="EMBL" id="AE016877">
    <property type="protein sequence ID" value="AAP07368.1"/>
    <property type="molecule type" value="Genomic_DNA"/>
</dbReference>
<dbReference type="RefSeq" id="NP_830167.1">
    <property type="nucleotide sequence ID" value="NC_004722.1"/>
</dbReference>
<dbReference type="RefSeq" id="WP_000666774.1">
    <property type="nucleotide sequence ID" value="NZ_CP138336.1"/>
</dbReference>
<dbReference type="SMR" id="Q81IQ4"/>
<dbReference type="STRING" id="226900.BC_0328"/>
<dbReference type="KEGG" id="bce:BC0328"/>
<dbReference type="PATRIC" id="fig|226900.8.peg.300"/>
<dbReference type="HOGENOM" id="CLU_001031_3_1_9"/>
<dbReference type="OrthoDB" id="9804441at2"/>
<dbReference type="UniPathway" id="UPA00074">
    <property type="reaction ID" value="UER00128"/>
</dbReference>
<dbReference type="Proteomes" id="UP000001417">
    <property type="component" value="Chromosome"/>
</dbReference>
<dbReference type="GO" id="GO:0005737">
    <property type="term" value="C:cytoplasm"/>
    <property type="evidence" value="ECO:0007669"/>
    <property type="project" value="UniProtKB-SubCell"/>
</dbReference>
<dbReference type="GO" id="GO:0005524">
    <property type="term" value="F:ATP binding"/>
    <property type="evidence" value="ECO:0007669"/>
    <property type="project" value="UniProtKB-KW"/>
</dbReference>
<dbReference type="GO" id="GO:0004359">
    <property type="term" value="F:glutaminase activity"/>
    <property type="evidence" value="ECO:0007669"/>
    <property type="project" value="UniProtKB-EC"/>
</dbReference>
<dbReference type="GO" id="GO:0004642">
    <property type="term" value="F:phosphoribosylformylglycinamidine synthase activity"/>
    <property type="evidence" value="ECO:0007669"/>
    <property type="project" value="UniProtKB-UniRule"/>
</dbReference>
<dbReference type="GO" id="GO:0006189">
    <property type="term" value="P:'de novo' IMP biosynthetic process"/>
    <property type="evidence" value="ECO:0007669"/>
    <property type="project" value="UniProtKB-UniRule"/>
</dbReference>
<dbReference type="CDD" id="cd01740">
    <property type="entry name" value="GATase1_FGAR_AT"/>
    <property type="match status" value="1"/>
</dbReference>
<dbReference type="FunFam" id="3.40.50.880:FF:000019">
    <property type="entry name" value="Phosphoribosylformylglycinamidine synthase subunit PurQ"/>
    <property type="match status" value="1"/>
</dbReference>
<dbReference type="Gene3D" id="3.40.50.880">
    <property type="match status" value="1"/>
</dbReference>
<dbReference type="HAMAP" id="MF_00421">
    <property type="entry name" value="PurQ"/>
    <property type="match status" value="1"/>
</dbReference>
<dbReference type="InterPro" id="IPR029062">
    <property type="entry name" value="Class_I_gatase-like"/>
</dbReference>
<dbReference type="InterPro" id="IPR010075">
    <property type="entry name" value="PRibForGlyAmidine_synth_PurQ"/>
</dbReference>
<dbReference type="NCBIfam" id="TIGR01737">
    <property type="entry name" value="FGAM_synth_I"/>
    <property type="match status" value="1"/>
</dbReference>
<dbReference type="NCBIfam" id="NF002957">
    <property type="entry name" value="PRK03619.1"/>
    <property type="match status" value="1"/>
</dbReference>
<dbReference type="PANTHER" id="PTHR47552">
    <property type="entry name" value="PHOSPHORIBOSYLFORMYLGLYCINAMIDINE SYNTHASE SUBUNIT PURQ"/>
    <property type="match status" value="1"/>
</dbReference>
<dbReference type="PANTHER" id="PTHR47552:SF1">
    <property type="entry name" value="PHOSPHORIBOSYLFORMYLGLYCINAMIDINE SYNTHASE SUBUNIT PURQ"/>
    <property type="match status" value="1"/>
</dbReference>
<dbReference type="Pfam" id="PF13507">
    <property type="entry name" value="GATase_5"/>
    <property type="match status" value="1"/>
</dbReference>
<dbReference type="PIRSF" id="PIRSF001586">
    <property type="entry name" value="FGAM_synth_I"/>
    <property type="match status" value="1"/>
</dbReference>
<dbReference type="SMART" id="SM01211">
    <property type="entry name" value="GATase_5"/>
    <property type="match status" value="1"/>
</dbReference>
<dbReference type="SUPFAM" id="SSF52317">
    <property type="entry name" value="Class I glutamine amidotransferase-like"/>
    <property type="match status" value="1"/>
</dbReference>
<dbReference type="PROSITE" id="PS51273">
    <property type="entry name" value="GATASE_TYPE_1"/>
    <property type="match status" value="1"/>
</dbReference>
<sequence>MKFAVIVFPGSNCDVDMFHAIKDELGEEVDYVWHDTENLDEYDAILLPGGFSYGDYLRCGAISRFANAMKAVQKAAEQGKPILGVCNGFQILVESGLLPGALIRNENLKFMCRTVQLRVENNETMFTSQYEKDEIINIPIAHGEGNYYCDEATLKQLEENNQIAFRYVENPNGSVSDIAGIVNEKGNVLGMMPHPERAVDELLGGAEGLKVFQSILKQWRETYVVNA</sequence>
<keyword id="KW-0067">ATP-binding</keyword>
<keyword id="KW-0963">Cytoplasm</keyword>
<keyword id="KW-0315">Glutamine amidotransferase</keyword>
<keyword id="KW-0378">Hydrolase</keyword>
<keyword id="KW-0436">Ligase</keyword>
<keyword id="KW-0547">Nucleotide-binding</keyword>
<keyword id="KW-0658">Purine biosynthesis</keyword>
<keyword id="KW-1185">Reference proteome</keyword>
<reference key="1">
    <citation type="journal article" date="2003" name="Nature">
        <title>Genome sequence of Bacillus cereus and comparative analysis with Bacillus anthracis.</title>
        <authorList>
            <person name="Ivanova N."/>
            <person name="Sorokin A."/>
            <person name="Anderson I."/>
            <person name="Galleron N."/>
            <person name="Candelon B."/>
            <person name="Kapatral V."/>
            <person name="Bhattacharyya A."/>
            <person name="Reznik G."/>
            <person name="Mikhailova N."/>
            <person name="Lapidus A."/>
            <person name="Chu L."/>
            <person name="Mazur M."/>
            <person name="Goltsman E."/>
            <person name="Larsen N."/>
            <person name="D'Souza M."/>
            <person name="Walunas T."/>
            <person name="Grechkin Y."/>
            <person name="Pusch G."/>
            <person name="Haselkorn R."/>
            <person name="Fonstein M."/>
            <person name="Ehrlich S.D."/>
            <person name="Overbeek R."/>
            <person name="Kyrpides N.C."/>
        </authorList>
    </citation>
    <scope>NUCLEOTIDE SEQUENCE [LARGE SCALE GENOMIC DNA]</scope>
    <source>
        <strain>ATCC 14579 / DSM 31 / CCUG 7414 / JCM 2152 / NBRC 15305 / NCIMB 9373 / NCTC 2599 / NRRL B-3711</strain>
    </source>
</reference>
<organism>
    <name type="scientific">Bacillus cereus (strain ATCC 14579 / DSM 31 / CCUG 7414 / JCM 2152 / NBRC 15305 / NCIMB 9373 / NCTC 2599 / NRRL B-3711)</name>
    <dbReference type="NCBI Taxonomy" id="226900"/>
    <lineage>
        <taxon>Bacteria</taxon>
        <taxon>Bacillati</taxon>
        <taxon>Bacillota</taxon>
        <taxon>Bacilli</taxon>
        <taxon>Bacillales</taxon>
        <taxon>Bacillaceae</taxon>
        <taxon>Bacillus</taxon>
        <taxon>Bacillus cereus group</taxon>
    </lineage>
</organism>
<name>PURQ_BACCR</name>
<evidence type="ECO:0000255" key="1">
    <source>
        <dbReference type="HAMAP-Rule" id="MF_00421"/>
    </source>
</evidence>
<feature type="chain" id="PRO_0000100533" description="Phosphoribosylformylglycinamidine synthase subunit PurQ">
    <location>
        <begin position="1"/>
        <end position="227"/>
    </location>
</feature>
<feature type="domain" description="Glutamine amidotransferase type-1" evidence="1">
    <location>
        <begin position="3"/>
        <end position="225"/>
    </location>
</feature>
<feature type="active site" description="Nucleophile" evidence="1">
    <location>
        <position position="86"/>
    </location>
</feature>
<feature type="active site" evidence="1">
    <location>
        <position position="194"/>
    </location>
</feature>
<feature type="active site" evidence="1">
    <location>
        <position position="196"/>
    </location>
</feature>
<gene>
    <name evidence="1" type="primary">purQ</name>
    <name type="ordered locus">BC_0328</name>
</gene>
<comment type="function">
    <text evidence="1">Part of the phosphoribosylformylglycinamidine synthase complex involved in the purines biosynthetic pathway. Catalyzes the ATP-dependent conversion of formylglycinamide ribonucleotide (FGAR) and glutamine to yield formylglycinamidine ribonucleotide (FGAM) and glutamate. The FGAM synthase complex is composed of three subunits. PurQ produces an ammonia molecule by converting glutamine to glutamate. PurL transfers the ammonia molecule to FGAR to form FGAM in an ATP-dependent manner. PurS interacts with PurQ and PurL and is thought to assist in the transfer of the ammonia molecule from PurQ to PurL.</text>
</comment>
<comment type="catalytic activity">
    <reaction evidence="1">
        <text>N(2)-formyl-N(1)-(5-phospho-beta-D-ribosyl)glycinamide + L-glutamine + ATP + H2O = 2-formamido-N(1)-(5-O-phospho-beta-D-ribosyl)acetamidine + L-glutamate + ADP + phosphate + H(+)</text>
        <dbReference type="Rhea" id="RHEA:17129"/>
        <dbReference type="ChEBI" id="CHEBI:15377"/>
        <dbReference type="ChEBI" id="CHEBI:15378"/>
        <dbReference type="ChEBI" id="CHEBI:29985"/>
        <dbReference type="ChEBI" id="CHEBI:30616"/>
        <dbReference type="ChEBI" id="CHEBI:43474"/>
        <dbReference type="ChEBI" id="CHEBI:58359"/>
        <dbReference type="ChEBI" id="CHEBI:147286"/>
        <dbReference type="ChEBI" id="CHEBI:147287"/>
        <dbReference type="ChEBI" id="CHEBI:456216"/>
        <dbReference type="EC" id="6.3.5.3"/>
    </reaction>
</comment>
<comment type="catalytic activity">
    <reaction evidence="1">
        <text>L-glutamine + H2O = L-glutamate + NH4(+)</text>
        <dbReference type="Rhea" id="RHEA:15889"/>
        <dbReference type="ChEBI" id="CHEBI:15377"/>
        <dbReference type="ChEBI" id="CHEBI:28938"/>
        <dbReference type="ChEBI" id="CHEBI:29985"/>
        <dbReference type="ChEBI" id="CHEBI:58359"/>
        <dbReference type="EC" id="3.5.1.2"/>
    </reaction>
</comment>
<comment type="pathway">
    <text evidence="1">Purine metabolism; IMP biosynthesis via de novo pathway; 5-amino-1-(5-phospho-D-ribosyl)imidazole from N(2)-formyl-N(1)-(5-phospho-D-ribosyl)glycinamide: step 1/2.</text>
</comment>
<comment type="subunit">
    <text evidence="1">Part of the FGAM synthase complex composed of 1 PurL, 1 PurQ and 2 PurS subunits.</text>
</comment>
<comment type="subcellular location">
    <subcellularLocation>
        <location evidence="1">Cytoplasm</location>
    </subcellularLocation>
</comment>
<accession>Q81IQ4</accession>